<keyword id="KW-1185">Reference proteome</keyword>
<keyword id="KW-0687">Ribonucleoprotein</keyword>
<keyword id="KW-0689">Ribosomal protein</keyword>
<protein>
    <recommendedName>
        <fullName evidence="1">Large ribosomal subunit protein bL17</fullName>
    </recommendedName>
    <alternativeName>
        <fullName evidence="2">50S ribosomal protein L17</fullName>
    </alternativeName>
</protein>
<accession>Q7V522</accession>
<dbReference type="EMBL" id="BX548175">
    <property type="protein sequence ID" value="CAE21931.1"/>
    <property type="molecule type" value="Genomic_DNA"/>
</dbReference>
<dbReference type="RefSeq" id="WP_011131123.1">
    <property type="nucleotide sequence ID" value="NC_005071.1"/>
</dbReference>
<dbReference type="SMR" id="Q7V522"/>
<dbReference type="KEGG" id="pmt:PMT_1756"/>
<dbReference type="eggNOG" id="COG0203">
    <property type="taxonomic scope" value="Bacteria"/>
</dbReference>
<dbReference type="HOGENOM" id="CLU_074407_2_2_3"/>
<dbReference type="OrthoDB" id="9809073at2"/>
<dbReference type="Proteomes" id="UP000001423">
    <property type="component" value="Chromosome"/>
</dbReference>
<dbReference type="GO" id="GO:0022625">
    <property type="term" value="C:cytosolic large ribosomal subunit"/>
    <property type="evidence" value="ECO:0007669"/>
    <property type="project" value="TreeGrafter"/>
</dbReference>
<dbReference type="GO" id="GO:0003735">
    <property type="term" value="F:structural constituent of ribosome"/>
    <property type="evidence" value="ECO:0007669"/>
    <property type="project" value="InterPro"/>
</dbReference>
<dbReference type="GO" id="GO:0006412">
    <property type="term" value="P:translation"/>
    <property type="evidence" value="ECO:0007669"/>
    <property type="project" value="UniProtKB-UniRule"/>
</dbReference>
<dbReference type="FunFam" id="3.90.1030.10:FF:000001">
    <property type="entry name" value="50S ribosomal protein L17"/>
    <property type="match status" value="1"/>
</dbReference>
<dbReference type="Gene3D" id="3.90.1030.10">
    <property type="entry name" value="Ribosomal protein L17"/>
    <property type="match status" value="1"/>
</dbReference>
<dbReference type="HAMAP" id="MF_01368">
    <property type="entry name" value="Ribosomal_bL17"/>
    <property type="match status" value="1"/>
</dbReference>
<dbReference type="InterPro" id="IPR000456">
    <property type="entry name" value="Ribosomal_bL17"/>
</dbReference>
<dbReference type="InterPro" id="IPR036373">
    <property type="entry name" value="Ribosomal_bL17_sf"/>
</dbReference>
<dbReference type="NCBIfam" id="TIGR00059">
    <property type="entry name" value="L17"/>
    <property type="match status" value="1"/>
</dbReference>
<dbReference type="PANTHER" id="PTHR14413:SF16">
    <property type="entry name" value="LARGE RIBOSOMAL SUBUNIT PROTEIN BL17M"/>
    <property type="match status" value="1"/>
</dbReference>
<dbReference type="PANTHER" id="PTHR14413">
    <property type="entry name" value="RIBOSOMAL PROTEIN L17"/>
    <property type="match status" value="1"/>
</dbReference>
<dbReference type="Pfam" id="PF01196">
    <property type="entry name" value="Ribosomal_L17"/>
    <property type="match status" value="1"/>
</dbReference>
<dbReference type="SUPFAM" id="SSF64263">
    <property type="entry name" value="Prokaryotic ribosomal protein L17"/>
    <property type="match status" value="1"/>
</dbReference>
<comment type="subunit">
    <text evidence="1">Part of the 50S ribosomal subunit. Contacts protein L32.</text>
</comment>
<comment type="similarity">
    <text evidence="1">Belongs to the bacterial ribosomal protein bL17 family.</text>
</comment>
<feature type="chain" id="PRO_1000055912" description="Large ribosomal subunit protein bL17">
    <location>
        <begin position="1"/>
        <end position="116"/>
    </location>
</feature>
<name>RL17_PROMM</name>
<proteinExistence type="inferred from homology"/>
<reference key="1">
    <citation type="journal article" date="2003" name="Nature">
        <title>Genome divergence in two Prochlorococcus ecotypes reflects oceanic niche differentiation.</title>
        <authorList>
            <person name="Rocap G."/>
            <person name="Larimer F.W."/>
            <person name="Lamerdin J.E."/>
            <person name="Malfatti S."/>
            <person name="Chain P."/>
            <person name="Ahlgren N.A."/>
            <person name="Arellano A."/>
            <person name="Coleman M."/>
            <person name="Hauser L."/>
            <person name="Hess W.R."/>
            <person name="Johnson Z.I."/>
            <person name="Land M.L."/>
            <person name="Lindell D."/>
            <person name="Post A.F."/>
            <person name="Regala W."/>
            <person name="Shah M."/>
            <person name="Shaw S.L."/>
            <person name="Steglich C."/>
            <person name="Sullivan M.B."/>
            <person name="Ting C.S."/>
            <person name="Tolonen A."/>
            <person name="Webb E.A."/>
            <person name="Zinser E.R."/>
            <person name="Chisholm S.W."/>
        </authorList>
    </citation>
    <scope>NUCLEOTIDE SEQUENCE [LARGE SCALE GENOMIC DNA]</scope>
    <source>
        <strain>MIT 9313</strain>
    </source>
</reference>
<evidence type="ECO:0000255" key="1">
    <source>
        <dbReference type="HAMAP-Rule" id="MF_01368"/>
    </source>
</evidence>
<evidence type="ECO:0000305" key="2"/>
<organism>
    <name type="scientific">Prochlorococcus marinus (strain MIT 9313)</name>
    <dbReference type="NCBI Taxonomy" id="74547"/>
    <lineage>
        <taxon>Bacteria</taxon>
        <taxon>Bacillati</taxon>
        <taxon>Cyanobacteriota</taxon>
        <taxon>Cyanophyceae</taxon>
        <taxon>Synechococcales</taxon>
        <taxon>Prochlorococcaceae</taxon>
        <taxon>Prochlorococcus</taxon>
    </lineage>
</organism>
<sequence length="116" mass="13307">MRHQCRVPKLGRPTDQRKAMLRGLTTQLIREGRVTTTKARAKALRDEAERMITLAKNGSLASRRRAIGYIYDKQLVHALFDKAQDRYGDRQGGYTRIIRTVPRRGDNAEMAIIELV</sequence>
<gene>
    <name evidence="1" type="primary">rplQ</name>
    <name evidence="1" type="synonym">rpl17</name>
    <name type="ordered locus">PMT_1756</name>
</gene>